<reference key="1">
    <citation type="journal article" date="1998" name="Science">
        <title>Genome sequence of the nematode C. elegans: a platform for investigating biology.</title>
        <authorList>
            <consortium name="The C. elegans sequencing consortium"/>
        </authorList>
    </citation>
    <scope>NUCLEOTIDE SEQUENCE [LARGE SCALE GENOMIC DNA]</scope>
    <source>
        <strain>Bristol N2</strain>
    </source>
</reference>
<reference key="2">
    <citation type="journal article" date="2007" name="Mol. Cell. Proteomics">
        <title>Proteomics reveals N-linked glycoprotein diversity in Caenorhabditis elegans and suggests an atypical translocation mechanism for integral membrane proteins.</title>
        <authorList>
            <person name="Kaji H."/>
            <person name="Kamiie J."/>
            <person name="Kawakami H."/>
            <person name="Kido K."/>
            <person name="Yamauchi Y."/>
            <person name="Shinkawa T."/>
            <person name="Taoka M."/>
            <person name="Takahashi N."/>
            <person name="Isobe T."/>
        </authorList>
    </citation>
    <scope>GLYCOSYLATION [LARGE SCALE ANALYSIS] AT ASN-204</scope>
    <scope>IDENTIFICATION BY MASS SPECTROMETRY</scope>
    <source>
        <strain>Bristol N2</strain>
    </source>
</reference>
<sequence length="290" mass="32905">MFHFSIGTVLISICWLAQWMEAKSQRIDPDAENELWDSIKHTKVQNIVEKNAIGEINSPPTDGTPYLKVVCISDTHEQLHNVTVPDGDVLIHAGDFTNNGKREELIKFNEEMTRFPHKYKLVVAGNHELGFDHDENQGERQDADKGLGTEDGYNILTNVTYLQDKGVTIDGVTFFGSSYHPLRGFPFYRNRAEQLAECWKAVPNDTNVLITHTPPLGYLDQFGDERWGCRDLLKTVERIQPAYHIFGHVHEQHGVLSNGNTTFINAAQCNKGNQIQTRPIVFYIPKKTLS</sequence>
<keyword id="KW-0325">Glycoprotein</keyword>
<keyword id="KW-1185">Reference proteome</keyword>
<keyword id="KW-0732">Signal</keyword>
<comment type="similarity">
    <text evidence="3">Belongs to the UPF0046 family.</text>
</comment>
<accession>Q21268</accession>
<feature type="signal peptide" evidence="1">
    <location>
        <begin position="1"/>
        <end position="22"/>
    </location>
</feature>
<feature type="chain" id="PRO_0000053409" description="UPF0046 protein K07C11.7">
    <location>
        <begin position="23"/>
        <end position="290"/>
    </location>
</feature>
<feature type="glycosylation site" description="N-linked (GlcNAc...) asparagine" evidence="2">
    <location>
        <position position="204"/>
    </location>
</feature>
<organism>
    <name type="scientific">Caenorhabditis elegans</name>
    <dbReference type="NCBI Taxonomy" id="6239"/>
    <lineage>
        <taxon>Eukaryota</taxon>
        <taxon>Metazoa</taxon>
        <taxon>Ecdysozoa</taxon>
        <taxon>Nematoda</taxon>
        <taxon>Chromadorea</taxon>
        <taxon>Rhabditida</taxon>
        <taxon>Rhabditina</taxon>
        <taxon>Rhabditomorpha</taxon>
        <taxon>Rhabditoidea</taxon>
        <taxon>Rhabditidae</taxon>
        <taxon>Peloderinae</taxon>
        <taxon>Caenorhabditis</taxon>
    </lineage>
</organism>
<protein>
    <recommendedName>
        <fullName>UPF0046 protein K07C11.7</fullName>
    </recommendedName>
</protein>
<name>YMSO_CAEEL</name>
<evidence type="ECO:0000255" key="1"/>
<evidence type="ECO:0000269" key="2">
    <source>
    </source>
</evidence>
<evidence type="ECO:0000305" key="3"/>
<gene>
    <name type="ORF">K07C11.7</name>
</gene>
<proteinExistence type="evidence at protein level"/>
<dbReference type="EMBL" id="FO080570">
    <property type="protein sequence ID" value="CCD64761.1"/>
    <property type="molecule type" value="Genomic_DNA"/>
</dbReference>
<dbReference type="PIR" id="A89124">
    <property type="entry name" value="A89124"/>
</dbReference>
<dbReference type="RefSeq" id="NP_505116.1">
    <property type="nucleotide sequence ID" value="NM_072715.6"/>
</dbReference>
<dbReference type="SMR" id="Q21268"/>
<dbReference type="BioGRID" id="44242">
    <property type="interactions" value="2"/>
</dbReference>
<dbReference type="FunCoup" id="Q21268">
    <property type="interactions" value="1"/>
</dbReference>
<dbReference type="iPTMnet" id="Q21268"/>
<dbReference type="PaxDb" id="6239-K07C11.7a"/>
<dbReference type="EnsemblMetazoa" id="K07C11.7a.1">
    <property type="protein sequence ID" value="K07C11.7a.1"/>
    <property type="gene ID" value="WBGene00019479"/>
</dbReference>
<dbReference type="GeneID" id="179200"/>
<dbReference type="KEGG" id="cel:CELE_K07C11.7"/>
<dbReference type="UCSC" id="K07C11.7a">
    <property type="organism name" value="c. elegans"/>
</dbReference>
<dbReference type="AGR" id="WB:WBGene00019479"/>
<dbReference type="CTD" id="179200"/>
<dbReference type="WormBase" id="K07C11.7a">
    <property type="protein sequence ID" value="CE28592"/>
    <property type="gene ID" value="WBGene00019479"/>
</dbReference>
<dbReference type="eggNOG" id="KOG3947">
    <property type="taxonomic scope" value="Eukaryota"/>
</dbReference>
<dbReference type="GeneTree" id="ENSGT00390000007681"/>
<dbReference type="InParanoid" id="Q21268"/>
<dbReference type="OMA" id="DTHEQLH"/>
<dbReference type="OrthoDB" id="630188at2759"/>
<dbReference type="PhylomeDB" id="Q21268"/>
<dbReference type="PRO" id="PR:Q21268"/>
<dbReference type="Proteomes" id="UP000001940">
    <property type="component" value="Chromosome V"/>
</dbReference>
<dbReference type="Bgee" id="WBGene00019479">
    <property type="expression patterns" value="Expressed in larva and 4 other cell types or tissues"/>
</dbReference>
<dbReference type="ExpressionAtlas" id="Q21268">
    <property type="expression patterns" value="baseline and differential"/>
</dbReference>
<dbReference type="GO" id="GO:0016787">
    <property type="term" value="F:hydrolase activity"/>
    <property type="evidence" value="ECO:0007669"/>
    <property type="project" value="InterPro"/>
</dbReference>
<dbReference type="CDD" id="cd07379">
    <property type="entry name" value="MPP_239FB"/>
    <property type="match status" value="1"/>
</dbReference>
<dbReference type="Gene3D" id="3.60.21.10">
    <property type="match status" value="1"/>
</dbReference>
<dbReference type="InterPro" id="IPR024201">
    <property type="entry name" value="Calcineurin-like_Pesterase"/>
</dbReference>
<dbReference type="InterPro" id="IPR004843">
    <property type="entry name" value="Calcineurin-like_PHP_ApaH"/>
</dbReference>
<dbReference type="InterPro" id="IPR029052">
    <property type="entry name" value="Metallo-depent_PP-like"/>
</dbReference>
<dbReference type="InterPro" id="IPR051693">
    <property type="entry name" value="UPF0046_metallophosphoest"/>
</dbReference>
<dbReference type="PANTHER" id="PTHR12905">
    <property type="entry name" value="METALLOPHOSPHOESTERASE"/>
    <property type="match status" value="1"/>
</dbReference>
<dbReference type="PANTHER" id="PTHR12905:SF19">
    <property type="entry name" value="UPF0046 PROTEIN K07C11.7"/>
    <property type="match status" value="1"/>
</dbReference>
<dbReference type="Pfam" id="PF00149">
    <property type="entry name" value="Metallophos"/>
    <property type="match status" value="1"/>
</dbReference>
<dbReference type="PIRSF" id="PIRSF035808">
    <property type="entry name" value="Pdiesterase_Brain_239"/>
    <property type="match status" value="1"/>
</dbReference>
<dbReference type="SUPFAM" id="SSF56300">
    <property type="entry name" value="Metallo-dependent phosphatases"/>
    <property type="match status" value="1"/>
</dbReference>